<dbReference type="EC" id="2.1.1.-" evidence="1"/>
<dbReference type="EMBL" id="AE009439">
    <property type="protein sequence ID" value="AAM02147.1"/>
    <property type="molecule type" value="Genomic_DNA"/>
</dbReference>
<dbReference type="RefSeq" id="WP_011019302.1">
    <property type="nucleotide sequence ID" value="NC_003551.1"/>
</dbReference>
<dbReference type="SMR" id="Q8TWU7"/>
<dbReference type="FunCoup" id="Q8TWU7">
    <property type="interactions" value="85"/>
</dbReference>
<dbReference type="STRING" id="190192.MK0934"/>
<dbReference type="PaxDb" id="190192-MK0934"/>
<dbReference type="EnsemblBacteria" id="AAM02147">
    <property type="protein sequence ID" value="AAM02147"/>
    <property type="gene ID" value="MK0934"/>
</dbReference>
<dbReference type="GeneID" id="1477035"/>
<dbReference type="KEGG" id="mka:MK0934"/>
<dbReference type="PATRIC" id="fig|190192.8.peg.977"/>
<dbReference type="HOGENOM" id="CLU_041220_0_2_2"/>
<dbReference type="InParanoid" id="Q8TWU7"/>
<dbReference type="Proteomes" id="UP000001826">
    <property type="component" value="Chromosome"/>
</dbReference>
<dbReference type="GO" id="GO:0005737">
    <property type="term" value="C:cytoplasm"/>
    <property type="evidence" value="ECO:0007669"/>
    <property type="project" value="UniProtKB-SubCell"/>
</dbReference>
<dbReference type="GO" id="GO:0003723">
    <property type="term" value="F:RNA binding"/>
    <property type="evidence" value="ECO:0007669"/>
    <property type="project" value="UniProtKB-KW"/>
</dbReference>
<dbReference type="GO" id="GO:0000179">
    <property type="term" value="F:rRNA (adenine-N6,N6-)-dimethyltransferase activity"/>
    <property type="evidence" value="ECO:0007669"/>
    <property type="project" value="InterPro"/>
</dbReference>
<dbReference type="CDD" id="cd02440">
    <property type="entry name" value="AdoMet_MTases"/>
    <property type="match status" value="1"/>
</dbReference>
<dbReference type="FunFam" id="3.40.50.150:FF:000023">
    <property type="entry name" value="Ribosomal RNA small subunit methyltransferase A"/>
    <property type="match status" value="1"/>
</dbReference>
<dbReference type="Gene3D" id="1.10.8.100">
    <property type="entry name" value="Ribosomal RNA adenine dimethylase-like, domain 2"/>
    <property type="match status" value="1"/>
</dbReference>
<dbReference type="Gene3D" id="3.40.50.150">
    <property type="entry name" value="Vaccinia Virus protein VP39"/>
    <property type="match status" value="1"/>
</dbReference>
<dbReference type="HAMAP" id="MF_00607">
    <property type="entry name" value="16SrRNA_methyltr_A"/>
    <property type="match status" value="1"/>
</dbReference>
<dbReference type="InterPro" id="IPR001737">
    <property type="entry name" value="KsgA/Erm"/>
</dbReference>
<dbReference type="InterPro" id="IPR023165">
    <property type="entry name" value="rRNA_Ade_diMease-like_C"/>
</dbReference>
<dbReference type="InterPro" id="IPR020596">
    <property type="entry name" value="rRNA_Ade_Mease_Trfase_CS"/>
</dbReference>
<dbReference type="InterPro" id="IPR020598">
    <property type="entry name" value="rRNA_Ade_methylase_Trfase_N"/>
</dbReference>
<dbReference type="InterPro" id="IPR011530">
    <property type="entry name" value="rRNA_adenine_dimethylase"/>
</dbReference>
<dbReference type="InterPro" id="IPR029063">
    <property type="entry name" value="SAM-dependent_MTases_sf"/>
</dbReference>
<dbReference type="NCBIfam" id="TIGR00755">
    <property type="entry name" value="ksgA"/>
    <property type="match status" value="1"/>
</dbReference>
<dbReference type="PANTHER" id="PTHR11727">
    <property type="entry name" value="DIMETHYLADENOSINE TRANSFERASE"/>
    <property type="match status" value="1"/>
</dbReference>
<dbReference type="PANTHER" id="PTHR11727:SF7">
    <property type="entry name" value="DIMETHYLADENOSINE TRANSFERASE-RELATED"/>
    <property type="match status" value="1"/>
</dbReference>
<dbReference type="Pfam" id="PF00398">
    <property type="entry name" value="RrnaAD"/>
    <property type="match status" value="1"/>
</dbReference>
<dbReference type="SMART" id="SM00650">
    <property type="entry name" value="rADc"/>
    <property type="match status" value="1"/>
</dbReference>
<dbReference type="SUPFAM" id="SSF53335">
    <property type="entry name" value="S-adenosyl-L-methionine-dependent methyltransferases"/>
    <property type="match status" value="1"/>
</dbReference>
<dbReference type="PROSITE" id="PS01131">
    <property type="entry name" value="RRNA_A_DIMETH"/>
    <property type="match status" value="1"/>
</dbReference>
<dbReference type="PROSITE" id="PS51689">
    <property type="entry name" value="SAM_RNA_A_N6_MT"/>
    <property type="match status" value="1"/>
</dbReference>
<gene>
    <name evidence="1" type="primary">rsmA</name>
    <name evidence="1" type="synonym">ksgA</name>
    <name type="ordered locus">MK0934</name>
</gene>
<accession>Q8TWU7</accession>
<keyword id="KW-0963">Cytoplasm</keyword>
<keyword id="KW-0489">Methyltransferase</keyword>
<keyword id="KW-1185">Reference proteome</keyword>
<keyword id="KW-0694">RNA-binding</keyword>
<keyword id="KW-0698">rRNA processing</keyword>
<keyword id="KW-0949">S-adenosyl-L-methionine</keyword>
<keyword id="KW-0808">Transferase</keyword>
<name>RSMA_METKA</name>
<proteinExistence type="inferred from homology"/>
<sequence length="278" mass="31520">MRSVEYLAYLRSKYGIRPRRRLGQHFMVDDNILEFMVEAAEVREDDIVLEIGPGPGLLTRYLMTRAGQVIAVELDGRMVEILKRELGEAPNLEIVRADFLEYDVPDDVNKVVANIPYNISSPITFKLLELDIDVAVLTYQREFAERMVAEPGSKKYSRLTVMVNLLADVELLRGVPRRAFIPPPRVGSSVVRLTPKSEEERPDVDPDTLESVCRALFQHKNKTVRNALLLSAHEWATDREQAREVLEELPEDLLSERPLHLPPERVAELAAAIESALG</sequence>
<evidence type="ECO:0000255" key="1">
    <source>
        <dbReference type="HAMAP-Rule" id="MF_00607"/>
    </source>
</evidence>
<organism>
    <name type="scientific">Methanopyrus kandleri (strain AV19 / DSM 6324 / JCM 9639 / NBRC 100938)</name>
    <dbReference type="NCBI Taxonomy" id="190192"/>
    <lineage>
        <taxon>Archaea</taxon>
        <taxon>Methanobacteriati</taxon>
        <taxon>Methanobacteriota</taxon>
        <taxon>Methanomada group</taxon>
        <taxon>Methanopyri</taxon>
        <taxon>Methanopyrales</taxon>
        <taxon>Methanopyraceae</taxon>
        <taxon>Methanopyrus</taxon>
    </lineage>
</organism>
<feature type="chain" id="PRO_0000101657" description="Probable ribosomal RNA small subunit methyltransferase A">
    <location>
        <begin position="1"/>
        <end position="278"/>
    </location>
</feature>
<feature type="binding site" evidence="1">
    <location>
        <position position="25"/>
    </location>
    <ligand>
        <name>S-adenosyl-L-methionine</name>
        <dbReference type="ChEBI" id="CHEBI:59789"/>
    </ligand>
</feature>
<feature type="binding site" evidence="1">
    <location>
        <position position="27"/>
    </location>
    <ligand>
        <name>S-adenosyl-L-methionine</name>
        <dbReference type="ChEBI" id="CHEBI:59789"/>
    </ligand>
</feature>
<feature type="binding site" evidence="1">
    <location>
        <position position="52"/>
    </location>
    <ligand>
        <name>S-adenosyl-L-methionine</name>
        <dbReference type="ChEBI" id="CHEBI:59789"/>
    </ligand>
</feature>
<feature type="binding site" evidence="1">
    <location>
        <position position="73"/>
    </location>
    <ligand>
        <name>S-adenosyl-L-methionine</name>
        <dbReference type="ChEBI" id="CHEBI:59789"/>
    </ligand>
</feature>
<feature type="binding site" evidence="1">
    <location>
        <position position="98"/>
    </location>
    <ligand>
        <name>S-adenosyl-L-methionine</name>
        <dbReference type="ChEBI" id="CHEBI:59789"/>
    </ligand>
</feature>
<feature type="binding site" evidence="1">
    <location>
        <position position="114"/>
    </location>
    <ligand>
        <name>S-adenosyl-L-methionine</name>
        <dbReference type="ChEBI" id="CHEBI:59789"/>
    </ligand>
</feature>
<protein>
    <recommendedName>
        <fullName evidence="1">Probable ribosomal RNA small subunit methyltransferase A</fullName>
        <ecNumber evidence="1">2.1.1.-</ecNumber>
    </recommendedName>
    <alternativeName>
        <fullName evidence="1">16S rRNA dimethyladenosine transferase</fullName>
    </alternativeName>
    <alternativeName>
        <fullName evidence="1">16S rRNA dimethylase</fullName>
    </alternativeName>
    <alternativeName>
        <fullName evidence="1">S-adenosylmethionine-6-N',N'-adenosyl(rRNA) dimethyltransferase</fullName>
    </alternativeName>
</protein>
<reference key="1">
    <citation type="journal article" date="2002" name="Proc. Natl. Acad. Sci. U.S.A.">
        <title>The complete genome of hyperthermophile Methanopyrus kandleri AV19 and monophyly of archaeal methanogens.</title>
        <authorList>
            <person name="Slesarev A.I."/>
            <person name="Mezhevaya K.V."/>
            <person name="Makarova K.S."/>
            <person name="Polushin N.N."/>
            <person name="Shcherbinina O.V."/>
            <person name="Shakhova V.V."/>
            <person name="Belova G.I."/>
            <person name="Aravind L."/>
            <person name="Natale D.A."/>
            <person name="Rogozin I.B."/>
            <person name="Tatusov R.L."/>
            <person name="Wolf Y.I."/>
            <person name="Stetter K.O."/>
            <person name="Malykh A.G."/>
            <person name="Koonin E.V."/>
            <person name="Kozyavkin S.A."/>
        </authorList>
    </citation>
    <scope>NUCLEOTIDE SEQUENCE [LARGE SCALE GENOMIC DNA]</scope>
    <source>
        <strain>AV19 / DSM 6324 / JCM 9639 / NBRC 100938</strain>
    </source>
</reference>
<comment type="function">
    <text evidence="1">Specifically dimethylates two adjacent adenosines in the loop of a conserved hairpin near the 3'-end of 16S rRNA in the 30S particle. May play a critical role in biogenesis of 30S subunits.</text>
</comment>
<comment type="subcellular location">
    <subcellularLocation>
        <location evidence="1">Cytoplasm</location>
    </subcellularLocation>
</comment>
<comment type="similarity">
    <text evidence="1">Belongs to the class I-like SAM-binding methyltransferase superfamily. rRNA adenine N(6)-methyltransferase family. RsmA subfamily.</text>
</comment>